<name>APT_RHOBA</name>
<keyword id="KW-0963">Cytoplasm</keyword>
<keyword id="KW-0328">Glycosyltransferase</keyword>
<keyword id="KW-0660">Purine salvage</keyword>
<keyword id="KW-1185">Reference proteome</keyword>
<keyword id="KW-0808">Transferase</keyword>
<evidence type="ECO:0000255" key="1">
    <source>
        <dbReference type="HAMAP-Rule" id="MF_00004"/>
    </source>
</evidence>
<gene>
    <name evidence="1" type="primary">apt</name>
    <name type="ordered locus">RB5847</name>
</gene>
<accession>Q7UR74</accession>
<dbReference type="EC" id="2.4.2.7" evidence="1"/>
<dbReference type="EMBL" id="BX294143">
    <property type="protein sequence ID" value="CAD74466.1"/>
    <property type="molecule type" value="Genomic_DNA"/>
</dbReference>
<dbReference type="RefSeq" id="NP_866925.1">
    <property type="nucleotide sequence ID" value="NC_005027.1"/>
</dbReference>
<dbReference type="SMR" id="Q7UR74"/>
<dbReference type="FunCoup" id="Q7UR74">
    <property type="interactions" value="394"/>
</dbReference>
<dbReference type="STRING" id="243090.RB5847"/>
<dbReference type="EnsemblBacteria" id="CAD74466">
    <property type="protein sequence ID" value="CAD74466"/>
    <property type="gene ID" value="RB5847"/>
</dbReference>
<dbReference type="KEGG" id="rba:RB5847"/>
<dbReference type="PATRIC" id="fig|243090.15.peg.2813"/>
<dbReference type="eggNOG" id="COG0503">
    <property type="taxonomic scope" value="Bacteria"/>
</dbReference>
<dbReference type="HOGENOM" id="CLU_063339_3_0_0"/>
<dbReference type="InParanoid" id="Q7UR74"/>
<dbReference type="OrthoDB" id="9803963at2"/>
<dbReference type="UniPathway" id="UPA00588">
    <property type="reaction ID" value="UER00646"/>
</dbReference>
<dbReference type="Proteomes" id="UP000001025">
    <property type="component" value="Chromosome"/>
</dbReference>
<dbReference type="GO" id="GO:0005737">
    <property type="term" value="C:cytoplasm"/>
    <property type="evidence" value="ECO:0000318"/>
    <property type="project" value="GO_Central"/>
</dbReference>
<dbReference type="GO" id="GO:0002055">
    <property type="term" value="F:adenine binding"/>
    <property type="evidence" value="ECO:0000318"/>
    <property type="project" value="GO_Central"/>
</dbReference>
<dbReference type="GO" id="GO:0003999">
    <property type="term" value="F:adenine phosphoribosyltransferase activity"/>
    <property type="evidence" value="ECO:0000318"/>
    <property type="project" value="GO_Central"/>
</dbReference>
<dbReference type="GO" id="GO:0016208">
    <property type="term" value="F:AMP binding"/>
    <property type="evidence" value="ECO:0000318"/>
    <property type="project" value="GO_Central"/>
</dbReference>
<dbReference type="GO" id="GO:0006168">
    <property type="term" value="P:adenine salvage"/>
    <property type="evidence" value="ECO:0000318"/>
    <property type="project" value="GO_Central"/>
</dbReference>
<dbReference type="GO" id="GO:0044209">
    <property type="term" value="P:AMP salvage"/>
    <property type="evidence" value="ECO:0000318"/>
    <property type="project" value="GO_Central"/>
</dbReference>
<dbReference type="GO" id="GO:0006166">
    <property type="term" value="P:purine ribonucleoside salvage"/>
    <property type="evidence" value="ECO:0007669"/>
    <property type="project" value="UniProtKB-KW"/>
</dbReference>
<dbReference type="CDD" id="cd06223">
    <property type="entry name" value="PRTases_typeI"/>
    <property type="match status" value="1"/>
</dbReference>
<dbReference type="FunFam" id="3.40.50.2020:FF:000021">
    <property type="entry name" value="Adenine phosphoribosyltransferase"/>
    <property type="match status" value="1"/>
</dbReference>
<dbReference type="Gene3D" id="3.40.50.2020">
    <property type="match status" value="1"/>
</dbReference>
<dbReference type="HAMAP" id="MF_00004">
    <property type="entry name" value="Aden_phosphoribosyltr"/>
    <property type="match status" value="1"/>
</dbReference>
<dbReference type="InterPro" id="IPR005764">
    <property type="entry name" value="Ade_phspho_trans"/>
</dbReference>
<dbReference type="InterPro" id="IPR000836">
    <property type="entry name" value="PRibTrfase_dom"/>
</dbReference>
<dbReference type="InterPro" id="IPR029057">
    <property type="entry name" value="PRTase-like"/>
</dbReference>
<dbReference type="InterPro" id="IPR050054">
    <property type="entry name" value="UPRTase/APRTase"/>
</dbReference>
<dbReference type="NCBIfam" id="TIGR01090">
    <property type="entry name" value="apt"/>
    <property type="match status" value="1"/>
</dbReference>
<dbReference type="NCBIfam" id="NF002634">
    <property type="entry name" value="PRK02304.1-3"/>
    <property type="match status" value="1"/>
</dbReference>
<dbReference type="NCBIfam" id="NF002636">
    <property type="entry name" value="PRK02304.1-5"/>
    <property type="match status" value="1"/>
</dbReference>
<dbReference type="PANTHER" id="PTHR32315">
    <property type="entry name" value="ADENINE PHOSPHORIBOSYLTRANSFERASE"/>
    <property type="match status" value="1"/>
</dbReference>
<dbReference type="PANTHER" id="PTHR32315:SF3">
    <property type="entry name" value="ADENINE PHOSPHORIBOSYLTRANSFERASE"/>
    <property type="match status" value="1"/>
</dbReference>
<dbReference type="Pfam" id="PF00156">
    <property type="entry name" value="Pribosyltran"/>
    <property type="match status" value="1"/>
</dbReference>
<dbReference type="SUPFAM" id="SSF53271">
    <property type="entry name" value="PRTase-like"/>
    <property type="match status" value="1"/>
</dbReference>
<dbReference type="PROSITE" id="PS00103">
    <property type="entry name" value="PUR_PYR_PR_TRANSFER"/>
    <property type="match status" value="1"/>
</dbReference>
<feature type="chain" id="PRO_0000149441" description="Adenine phosphoribosyltransferase">
    <location>
        <begin position="1"/>
        <end position="206"/>
    </location>
</feature>
<sequence length="206" mass="22692">MCDQLAFASQRKPYQHMDLRHHVRDIPDYPKPGILFRDITPLLAHPEALTASVEEMAKPFLDQKIDVVAAAEARGFIFGTPLAMRLNAGFVPIRKPGKLPFDLHSFAYELEYGSDELQIHVDGIKPGQRVLIVDDLLATGGTVEACLRLLEKCDAEIVGCSFLIHLVALGGEARLSPYHVHSVLEYGGDDAEDELSIQNRPPGPSV</sequence>
<proteinExistence type="inferred from homology"/>
<organism>
    <name type="scientific">Rhodopirellula baltica (strain DSM 10527 / NCIMB 13988 / SH1)</name>
    <dbReference type="NCBI Taxonomy" id="243090"/>
    <lineage>
        <taxon>Bacteria</taxon>
        <taxon>Pseudomonadati</taxon>
        <taxon>Planctomycetota</taxon>
        <taxon>Planctomycetia</taxon>
        <taxon>Pirellulales</taxon>
        <taxon>Pirellulaceae</taxon>
        <taxon>Rhodopirellula</taxon>
    </lineage>
</organism>
<protein>
    <recommendedName>
        <fullName evidence="1">Adenine phosphoribosyltransferase</fullName>
        <shortName evidence="1">APRT</shortName>
        <ecNumber evidence="1">2.4.2.7</ecNumber>
    </recommendedName>
</protein>
<reference key="1">
    <citation type="journal article" date="2003" name="Proc. Natl. Acad. Sci. U.S.A.">
        <title>Complete genome sequence of the marine planctomycete Pirellula sp. strain 1.</title>
        <authorList>
            <person name="Gloeckner F.O."/>
            <person name="Kube M."/>
            <person name="Bauer M."/>
            <person name="Teeling H."/>
            <person name="Lombardot T."/>
            <person name="Ludwig W."/>
            <person name="Gade D."/>
            <person name="Beck A."/>
            <person name="Borzym K."/>
            <person name="Heitmann K."/>
            <person name="Rabus R."/>
            <person name="Schlesner H."/>
            <person name="Amann R."/>
            <person name="Reinhardt R."/>
        </authorList>
    </citation>
    <scope>NUCLEOTIDE SEQUENCE [LARGE SCALE GENOMIC DNA]</scope>
    <source>
        <strain>DSM 10527 / NCIMB 13988 / SH1</strain>
    </source>
</reference>
<comment type="function">
    <text evidence="1">Catalyzes a salvage reaction resulting in the formation of AMP, that is energically less costly than de novo synthesis.</text>
</comment>
<comment type="catalytic activity">
    <reaction evidence="1">
        <text>AMP + diphosphate = 5-phospho-alpha-D-ribose 1-diphosphate + adenine</text>
        <dbReference type="Rhea" id="RHEA:16609"/>
        <dbReference type="ChEBI" id="CHEBI:16708"/>
        <dbReference type="ChEBI" id="CHEBI:33019"/>
        <dbReference type="ChEBI" id="CHEBI:58017"/>
        <dbReference type="ChEBI" id="CHEBI:456215"/>
        <dbReference type="EC" id="2.4.2.7"/>
    </reaction>
</comment>
<comment type="pathway">
    <text evidence="1">Purine metabolism; AMP biosynthesis via salvage pathway; AMP from adenine: step 1/1.</text>
</comment>
<comment type="subunit">
    <text evidence="1">Homodimer.</text>
</comment>
<comment type="subcellular location">
    <subcellularLocation>
        <location evidence="1">Cytoplasm</location>
    </subcellularLocation>
</comment>
<comment type="similarity">
    <text evidence="1">Belongs to the purine/pyrimidine phosphoribosyltransferase family.</text>
</comment>